<feature type="chain" id="PRO_1000071863" description="Large ribosomal subunit protein bL36">
    <location>
        <begin position="1"/>
        <end position="41"/>
    </location>
</feature>
<sequence length="41" mass="5135">MKIRNSLRSLRNRHRDNRLVRRKGRVYIINKTNRRFKARQG</sequence>
<protein>
    <recommendedName>
        <fullName evidence="1">Large ribosomal subunit protein bL36</fullName>
    </recommendedName>
    <alternativeName>
        <fullName evidence="2">50S ribosomal protein L36</fullName>
    </alternativeName>
</protein>
<proteinExistence type="inferred from homology"/>
<organism>
    <name type="scientific">Parvibaculum lavamentivorans (strain DS-1 / DSM 13023 / NCIMB 13966)</name>
    <dbReference type="NCBI Taxonomy" id="402881"/>
    <lineage>
        <taxon>Bacteria</taxon>
        <taxon>Pseudomonadati</taxon>
        <taxon>Pseudomonadota</taxon>
        <taxon>Alphaproteobacteria</taxon>
        <taxon>Hyphomicrobiales</taxon>
        <taxon>Parvibaculaceae</taxon>
        <taxon>Parvibaculum</taxon>
    </lineage>
</organism>
<name>RL36_PARL1</name>
<gene>
    <name evidence="1" type="primary">rpmJ</name>
    <name type="ordered locus">Plav_2025</name>
</gene>
<comment type="similarity">
    <text evidence="1">Belongs to the bacterial ribosomal protein bL36 family.</text>
</comment>
<evidence type="ECO:0000255" key="1">
    <source>
        <dbReference type="HAMAP-Rule" id="MF_00251"/>
    </source>
</evidence>
<evidence type="ECO:0000305" key="2"/>
<keyword id="KW-1185">Reference proteome</keyword>
<keyword id="KW-0687">Ribonucleoprotein</keyword>
<keyword id="KW-0689">Ribosomal protein</keyword>
<accession>A7HUQ6</accession>
<dbReference type="EMBL" id="CP000774">
    <property type="protein sequence ID" value="ABS63639.1"/>
    <property type="molecule type" value="Genomic_DNA"/>
</dbReference>
<dbReference type="SMR" id="A7HUQ6"/>
<dbReference type="STRING" id="402881.Plav_2025"/>
<dbReference type="KEGG" id="pla:Plav_2025"/>
<dbReference type="eggNOG" id="COG0257">
    <property type="taxonomic scope" value="Bacteria"/>
</dbReference>
<dbReference type="HOGENOM" id="CLU_135723_3_2_5"/>
<dbReference type="Proteomes" id="UP000006377">
    <property type="component" value="Chromosome"/>
</dbReference>
<dbReference type="GO" id="GO:1990904">
    <property type="term" value="C:ribonucleoprotein complex"/>
    <property type="evidence" value="ECO:0007669"/>
    <property type="project" value="UniProtKB-KW"/>
</dbReference>
<dbReference type="GO" id="GO:0005840">
    <property type="term" value="C:ribosome"/>
    <property type="evidence" value="ECO:0007669"/>
    <property type="project" value="UniProtKB-KW"/>
</dbReference>
<dbReference type="GO" id="GO:0003735">
    <property type="term" value="F:structural constituent of ribosome"/>
    <property type="evidence" value="ECO:0007669"/>
    <property type="project" value="InterPro"/>
</dbReference>
<dbReference type="GO" id="GO:0006412">
    <property type="term" value="P:translation"/>
    <property type="evidence" value="ECO:0007669"/>
    <property type="project" value="UniProtKB-UniRule"/>
</dbReference>
<dbReference type="HAMAP" id="MF_00251">
    <property type="entry name" value="Ribosomal_bL36"/>
    <property type="match status" value="1"/>
</dbReference>
<dbReference type="InterPro" id="IPR000473">
    <property type="entry name" value="Ribosomal_bL36"/>
</dbReference>
<dbReference type="InterPro" id="IPR035977">
    <property type="entry name" value="Ribosomal_bL36_sp"/>
</dbReference>
<dbReference type="InterPro" id="IPR047621">
    <property type="entry name" value="Ribosomal_L36_bact"/>
</dbReference>
<dbReference type="NCBIfam" id="NF002021">
    <property type="entry name" value="PRK00831.1"/>
    <property type="match status" value="1"/>
</dbReference>
<dbReference type="PANTHER" id="PTHR47781">
    <property type="entry name" value="50S RIBOSOMAL PROTEIN L36 2"/>
    <property type="match status" value="1"/>
</dbReference>
<dbReference type="PANTHER" id="PTHR47781:SF1">
    <property type="entry name" value="LARGE RIBOSOMAL SUBUNIT PROTEIN BL36B"/>
    <property type="match status" value="1"/>
</dbReference>
<dbReference type="Pfam" id="PF00444">
    <property type="entry name" value="Ribosomal_L36"/>
    <property type="match status" value="1"/>
</dbReference>
<dbReference type="SUPFAM" id="SSF57840">
    <property type="entry name" value="Ribosomal protein L36"/>
    <property type="match status" value="1"/>
</dbReference>
<dbReference type="PROSITE" id="PS00828">
    <property type="entry name" value="RIBOSOMAL_L36"/>
    <property type="match status" value="1"/>
</dbReference>
<reference key="1">
    <citation type="journal article" date="2011" name="Stand. Genomic Sci.">
        <title>Complete genome sequence of Parvibaculum lavamentivorans type strain (DS-1(T)).</title>
        <authorList>
            <person name="Schleheck D."/>
            <person name="Weiss M."/>
            <person name="Pitluck S."/>
            <person name="Bruce D."/>
            <person name="Land M.L."/>
            <person name="Han S."/>
            <person name="Saunders E."/>
            <person name="Tapia R."/>
            <person name="Detter C."/>
            <person name="Brettin T."/>
            <person name="Han J."/>
            <person name="Woyke T."/>
            <person name="Goodwin L."/>
            <person name="Pennacchio L."/>
            <person name="Nolan M."/>
            <person name="Cook A.M."/>
            <person name="Kjelleberg S."/>
            <person name="Thomas T."/>
        </authorList>
    </citation>
    <scope>NUCLEOTIDE SEQUENCE [LARGE SCALE GENOMIC DNA]</scope>
    <source>
        <strain>DS-1 / DSM 13023 / NCIMB 13966</strain>
    </source>
</reference>